<name>IOLG2_SACEN</name>
<protein>
    <recommendedName>
        <fullName evidence="1">Inositol 2-dehydrogenase 2</fullName>
        <ecNumber evidence="1">1.1.1.18</ecNumber>
    </recommendedName>
    <alternativeName>
        <fullName evidence="1">Myo-inositol 2-dehydrogenase 2</fullName>
        <shortName evidence="1">MI 2-dehydrogenase 2</shortName>
    </alternativeName>
</protein>
<gene>
    <name evidence="1" type="primary">iolG2</name>
    <name type="ordered locus">SACE_4537</name>
</gene>
<comment type="function">
    <text evidence="1">Involved in the oxidation of myo-inositol (MI) to 2-keto-myo-inositol (2KMI or 2-inosose).</text>
</comment>
<comment type="catalytic activity">
    <reaction evidence="1">
        <text>myo-inositol + NAD(+) = scyllo-inosose + NADH + H(+)</text>
        <dbReference type="Rhea" id="RHEA:16949"/>
        <dbReference type="ChEBI" id="CHEBI:15378"/>
        <dbReference type="ChEBI" id="CHEBI:17268"/>
        <dbReference type="ChEBI" id="CHEBI:17811"/>
        <dbReference type="ChEBI" id="CHEBI:57540"/>
        <dbReference type="ChEBI" id="CHEBI:57945"/>
        <dbReference type="EC" id="1.1.1.18"/>
    </reaction>
</comment>
<comment type="subunit">
    <text evidence="1">Homotetramer.</text>
</comment>
<comment type="similarity">
    <text evidence="1">Belongs to the Gfo/Idh/MocA family.</text>
</comment>
<dbReference type="EC" id="1.1.1.18" evidence="1"/>
<dbReference type="EMBL" id="AM420293">
    <property type="protein sequence ID" value="CAM03806.1"/>
    <property type="molecule type" value="Genomic_DNA"/>
</dbReference>
<dbReference type="RefSeq" id="WP_009951448.1">
    <property type="nucleotide sequence ID" value="NC_009142.1"/>
</dbReference>
<dbReference type="SMR" id="A4FID1"/>
<dbReference type="STRING" id="405948.SACE_4537"/>
<dbReference type="KEGG" id="sen:SACE_4537"/>
<dbReference type="eggNOG" id="COG0673">
    <property type="taxonomic scope" value="Bacteria"/>
</dbReference>
<dbReference type="HOGENOM" id="CLU_023194_0_1_11"/>
<dbReference type="OrthoDB" id="9815825at2"/>
<dbReference type="Proteomes" id="UP000006728">
    <property type="component" value="Chromosome"/>
</dbReference>
<dbReference type="GO" id="GO:0050112">
    <property type="term" value="F:inositol 2-dehydrogenase (NAD+) activity"/>
    <property type="evidence" value="ECO:0007669"/>
    <property type="project" value="UniProtKB-UniRule"/>
</dbReference>
<dbReference type="GO" id="GO:0000166">
    <property type="term" value="F:nucleotide binding"/>
    <property type="evidence" value="ECO:0007669"/>
    <property type="project" value="InterPro"/>
</dbReference>
<dbReference type="GO" id="GO:0019310">
    <property type="term" value="P:inositol catabolic process"/>
    <property type="evidence" value="ECO:0007669"/>
    <property type="project" value="UniProtKB-UniRule"/>
</dbReference>
<dbReference type="Gene3D" id="3.30.360.10">
    <property type="entry name" value="Dihydrodipicolinate Reductase, domain 2"/>
    <property type="match status" value="1"/>
</dbReference>
<dbReference type="Gene3D" id="3.40.50.720">
    <property type="entry name" value="NAD(P)-binding Rossmann-like Domain"/>
    <property type="match status" value="1"/>
</dbReference>
<dbReference type="HAMAP" id="MF_01671">
    <property type="entry name" value="IolG"/>
    <property type="match status" value="1"/>
</dbReference>
<dbReference type="InterPro" id="IPR050424">
    <property type="entry name" value="Gfo-Idh-MocA_inositol_DH"/>
</dbReference>
<dbReference type="InterPro" id="IPR004104">
    <property type="entry name" value="Gfo/Idh/MocA-like_OxRdtase_C"/>
</dbReference>
<dbReference type="InterPro" id="IPR000683">
    <property type="entry name" value="Gfo/Idh/MocA-like_OxRdtase_N"/>
</dbReference>
<dbReference type="InterPro" id="IPR023794">
    <property type="entry name" value="MI/DCI_dehydrogenase"/>
</dbReference>
<dbReference type="InterPro" id="IPR036291">
    <property type="entry name" value="NAD(P)-bd_dom_sf"/>
</dbReference>
<dbReference type="PANTHER" id="PTHR43593">
    <property type="match status" value="1"/>
</dbReference>
<dbReference type="PANTHER" id="PTHR43593:SF1">
    <property type="entry name" value="INOSITOL 2-DEHYDROGENASE"/>
    <property type="match status" value="1"/>
</dbReference>
<dbReference type="Pfam" id="PF01408">
    <property type="entry name" value="GFO_IDH_MocA"/>
    <property type="match status" value="1"/>
</dbReference>
<dbReference type="Pfam" id="PF02894">
    <property type="entry name" value="GFO_IDH_MocA_C"/>
    <property type="match status" value="1"/>
</dbReference>
<dbReference type="SUPFAM" id="SSF55347">
    <property type="entry name" value="Glyceraldehyde-3-phosphate dehydrogenase-like, C-terminal domain"/>
    <property type="match status" value="1"/>
</dbReference>
<dbReference type="SUPFAM" id="SSF51735">
    <property type="entry name" value="NAD(P)-binding Rossmann-fold domains"/>
    <property type="match status" value="1"/>
</dbReference>
<organism>
    <name type="scientific">Saccharopolyspora erythraea (strain ATCC 11635 / DSM 40517 / JCM 4748 / NBRC 13426 / NCIMB 8594 / NRRL 2338)</name>
    <dbReference type="NCBI Taxonomy" id="405948"/>
    <lineage>
        <taxon>Bacteria</taxon>
        <taxon>Bacillati</taxon>
        <taxon>Actinomycetota</taxon>
        <taxon>Actinomycetes</taxon>
        <taxon>Pseudonocardiales</taxon>
        <taxon>Pseudonocardiaceae</taxon>
        <taxon>Saccharopolyspora</taxon>
    </lineage>
</organism>
<evidence type="ECO:0000255" key="1">
    <source>
        <dbReference type="HAMAP-Rule" id="MF_01671"/>
    </source>
</evidence>
<keyword id="KW-0520">NAD</keyword>
<keyword id="KW-0560">Oxidoreductase</keyword>
<keyword id="KW-1185">Reference proteome</keyword>
<sequence length="339" mass="35899">MTMNIGVIGCGLMGADHIRTLTTAVSGARVAAVNDADEGRAAGAAAEAEGARVHSDPFGLIDDAEVDAVVVASADETHEEFALACVRAGKPVLCEKPLATTSEACLRVVEAEMRGGRPLVQVGFMRRFDPSYLEMKRVLDSGRIGRALMLHSVHRNAGYPPALPDSALITGTGVHDIDIARWLLGQEIVTATAHTPRRSGLARPDFQDTRFLVLETENGVLVDVEIFVNAGYGYDVRGELVGELGSISLHPPATLTTRYEGLEGRPVARDFRPRFQDAYRNELQAWVTAGASGEVRGATAWDGYASAAVAEACLHSVATGSTAPVEIAPQPALYAPLAA</sequence>
<feature type="chain" id="PRO_0000352591" description="Inositol 2-dehydrogenase 2">
    <location>
        <begin position="1"/>
        <end position="339"/>
    </location>
</feature>
<proteinExistence type="inferred from homology"/>
<reference key="1">
    <citation type="journal article" date="2007" name="Nat. Biotechnol.">
        <title>Complete genome sequence of the erythromycin-producing bacterium Saccharopolyspora erythraea NRRL23338.</title>
        <authorList>
            <person name="Oliynyk M."/>
            <person name="Samborskyy M."/>
            <person name="Lester J.B."/>
            <person name="Mironenko T."/>
            <person name="Scott N."/>
            <person name="Dickens S."/>
            <person name="Haydock S.F."/>
            <person name="Leadlay P.F."/>
        </authorList>
    </citation>
    <scope>NUCLEOTIDE SEQUENCE [LARGE SCALE GENOMIC DNA]</scope>
    <source>
        <strain>ATCC 11635 / DSM 40517 / JCM 4748 / NBRC 13426 / NCIMB 8594 / NRRL 2338</strain>
    </source>
</reference>
<accession>A4FID1</accession>